<organism>
    <name type="scientific">Thermotoga maritima (strain ATCC 43589 / DSM 3109 / JCM 10099 / NBRC 100826 / MSB8)</name>
    <dbReference type="NCBI Taxonomy" id="243274"/>
    <lineage>
        <taxon>Bacteria</taxon>
        <taxon>Thermotogati</taxon>
        <taxon>Thermotogota</taxon>
        <taxon>Thermotogae</taxon>
        <taxon>Thermotogales</taxon>
        <taxon>Thermotogaceae</taxon>
        <taxon>Thermotoga</taxon>
    </lineage>
</organism>
<feature type="chain" id="PRO_0000170098" description="LexA repressor">
    <location>
        <begin position="1"/>
        <end position="197"/>
    </location>
</feature>
<feature type="DNA-binding region" description="H-T-H motif" evidence="1">
    <location>
        <begin position="28"/>
        <end position="47"/>
    </location>
</feature>
<feature type="active site" description="For autocatalytic cleavage activity" evidence="1">
    <location>
        <position position="119"/>
    </location>
</feature>
<feature type="active site" description="For autocatalytic cleavage activity" evidence="1">
    <location>
        <position position="156"/>
    </location>
</feature>
<feature type="site" description="Cleavage; by autolysis" evidence="1">
    <location>
        <begin position="83"/>
        <end position="84"/>
    </location>
</feature>
<feature type="helix" evidence="2">
    <location>
        <begin position="6"/>
        <end position="22"/>
    </location>
</feature>
<feature type="helix" evidence="2">
    <location>
        <begin position="28"/>
        <end position="35"/>
    </location>
</feature>
<feature type="helix" evidence="2">
    <location>
        <begin position="39"/>
        <end position="51"/>
    </location>
</feature>
<feature type="strand" evidence="2">
    <location>
        <begin position="54"/>
        <end position="56"/>
    </location>
</feature>
<feature type="helix" evidence="2">
    <location>
        <begin position="58"/>
        <end position="60"/>
    </location>
</feature>
<feature type="strand" evidence="2">
    <location>
        <begin position="66"/>
        <end position="69"/>
    </location>
</feature>
<feature type="strand" evidence="2">
    <location>
        <begin position="74"/>
        <end position="83"/>
    </location>
</feature>
<feature type="helix" evidence="2">
    <location>
        <begin position="85"/>
        <end position="87"/>
    </location>
</feature>
<feature type="strand" evidence="2">
    <location>
        <begin position="89"/>
        <end position="98"/>
    </location>
</feature>
<feature type="helix" evidence="2">
    <location>
        <begin position="101"/>
        <end position="103"/>
    </location>
</feature>
<feature type="strand" evidence="2">
    <location>
        <begin position="110"/>
        <end position="114"/>
    </location>
</feature>
<feature type="helix" evidence="2">
    <location>
        <begin position="121"/>
        <end position="123"/>
    </location>
</feature>
<feature type="strand" evidence="2">
    <location>
        <begin position="130"/>
        <end position="135"/>
    </location>
</feature>
<feature type="strand" evidence="2">
    <location>
        <begin position="144"/>
        <end position="149"/>
    </location>
</feature>
<feature type="strand" evidence="2">
    <location>
        <begin position="152"/>
        <end position="161"/>
    </location>
</feature>
<feature type="strand" evidence="2">
    <location>
        <begin position="164"/>
        <end position="168"/>
    </location>
</feature>
<feature type="strand" evidence="2">
    <location>
        <begin position="177"/>
        <end position="180"/>
    </location>
</feature>
<feature type="helix" evidence="2">
    <location>
        <begin position="181"/>
        <end position="183"/>
    </location>
</feature>
<feature type="strand" evidence="2">
    <location>
        <begin position="185"/>
        <end position="196"/>
    </location>
</feature>
<comment type="function">
    <text evidence="1">Represses a number of genes involved in the response to DNA damage (SOS response), including recA and lexA. In the presence of single-stranded DNA, RecA interacts with LexA causing an autocatalytic cleavage which disrupts the DNA-binding part of LexA, leading to derepression of the SOS regulon and eventually DNA repair.</text>
</comment>
<comment type="catalytic activity">
    <reaction evidence="1">
        <text>Hydrolysis of Ala-|-Gly bond in repressor LexA.</text>
        <dbReference type="EC" id="3.4.21.88"/>
    </reaction>
</comment>
<comment type="subunit">
    <text evidence="1">Homodimer.</text>
</comment>
<comment type="miscellaneous">
    <text>No consensus sequence similar to the SOS-box from E.coli or from B.subtilis was found upstream of the lexA gene, suggesting the presence of another target sequence specific for the Thermotogales.</text>
</comment>
<comment type="similarity">
    <text evidence="1">Belongs to the peptidase S24 family.</text>
</comment>
<dbReference type="EC" id="3.4.21.88" evidence="1"/>
<dbReference type="EMBL" id="U76417">
    <property type="protein sequence ID" value="AAB87145.1"/>
    <property type="molecule type" value="Genomic_DNA"/>
</dbReference>
<dbReference type="EMBL" id="AE000512">
    <property type="protein sequence ID" value="AAD36159.1"/>
    <property type="molecule type" value="Genomic_DNA"/>
</dbReference>
<dbReference type="PIR" id="B72297">
    <property type="entry name" value="B72297"/>
</dbReference>
<dbReference type="RefSeq" id="NP_228888.1">
    <property type="nucleotide sequence ID" value="NC_000853.1"/>
</dbReference>
<dbReference type="RefSeq" id="WP_004080401.1">
    <property type="nucleotide sequence ID" value="NZ_CP011107.1"/>
</dbReference>
<dbReference type="PDB" id="3K2Z">
    <property type="method" value="X-ray"/>
    <property type="resolution" value="1.37 A"/>
    <property type="chains" value="A/B=3-197"/>
</dbReference>
<dbReference type="PDBsum" id="3K2Z"/>
<dbReference type="SMR" id="O33927"/>
<dbReference type="FunCoup" id="O33927">
    <property type="interactions" value="229"/>
</dbReference>
<dbReference type="STRING" id="243274.TM_1082"/>
<dbReference type="MEROPS" id="S24.001"/>
<dbReference type="PaxDb" id="243274-THEMA_08945"/>
<dbReference type="DNASU" id="897745"/>
<dbReference type="EnsemblBacteria" id="AAD36159">
    <property type="protein sequence ID" value="AAD36159"/>
    <property type="gene ID" value="TM_1082"/>
</dbReference>
<dbReference type="KEGG" id="tma:TM1082"/>
<dbReference type="KEGG" id="tmi:THEMA_08945"/>
<dbReference type="KEGG" id="tmm:Tmari_1086"/>
<dbReference type="KEGG" id="tmw:THMA_1104"/>
<dbReference type="eggNOG" id="COG1974">
    <property type="taxonomic scope" value="Bacteria"/>
</dbReference>
<dbReference type="InParanoid" id="O33927"/>
<dbReference type="OrthoDB" id="9802364at2"/>
<dbReference type="EvolutionaryTrace" id="O33927"/>
<dbReference type="Proteomes" id="UP000008183">
    <property type="component" value="Chromosome"/>
</dbReference>
<dbReference type="GO" id="GO:0032993">
    <property type="term" value="C:protein-DNA complex"/>
    <property type="evidence" value="ECO:0000318"/>
    <property type="project" value="GO_Central"/>
</dbReference>
<dbReference type="GO" id="GO:0001217">
    <property type="term" value="F:DNA-binding transcription repressor activity"/>
    <property type="evidence" value="ECO:0000318"/>
    <property type="project" value="GO_Central"/>
</dbReference>
<dbReference type="GO" id="GO:0043565">
    <property type="term" value="F:sequence-specific DNA binding"/>
    <property type="evidence" value="ECO:0000318"/>
    <property type="project" value="GO_Central"/>
</dbReference>
<dbReference type="GO" id="GO:0004252">
    <property type="term" value="F:serine-type endopeptidase activity"/>
    <property type="evidence" value="ECO:0007669"/>
    <property type="project" value="UniProtKB-UniRule"/>
</dbReference>
<dbReference type="GO" id="GO:0006281">
    <property type="term" value="P:DNA repair"/>
    <property type="evidence" value="ECO:0007669"/>
    <property type="project" value="UniProtKB-UniRule"/>
</dbReference>
<dbReference type="GO" id="GO:0006260">
    <property type="term" value="P:DNA replication"/>
    <property type="evidence" value="ECO:0007669"/>
    <property type="project" value="UniProtKB-UniRule"/>
</dbReference>
<dbReference type="GO" id="GO:0045892">
    <property type="term" value="P:negative regulation of DNA-templated transcription"/>
    <property type="evidence" value="ECO:0000318"/>
    <property type="project" value="GO_Central"/>
</dbReference>
<dbReference type="GO" id="GO:0006508">
    <property type="term" value="P:proteolysis"/>
    <property type="evidence" value="ECO:0007669"/>
    <property type="project" value="InterPro"/>
</dbReference>
<dbReference type="GO" id="GO:0009432">
    <property type="term" value="P:SOS response"/>
    <property type="evidence" value="ECO:0000318"/>
    <property type="project" value="GO_Central"/>
</dbReference>
<dbReference type="CDD" id="cd06529">
    <property type="entry name" value="S24_LexA-like"/>
    <property type="match status" value="1"/>
</dbReference>
<dbReference type="FunFam" id="2.10.109.10:FF:000001">
    <property type="entry name" value="LexA repressor"/>
    <property type="match status" value="1"/>
</dbReference>
<dbReference type="Gene3D" id="2.10.109.10">
    <property type="entry name" value="Umud Fragment, subunit A"/>
    <property type="match status" value="1"/>
</dbReference>
<dbReference type="Gene3D" id="1.10.10.10">
    <property type="entry name" value="Winged helix-like DNA-binding domain superfamily/Winged helix DNA-binding domain"/>
    <property type="match status" value="1"/>
</dbReference>
<dbReference type="HAMAP" id="MF_00015">
    <property type="entry name" value="LexA"/>
    <property type="match status" value="1"/>
</dbReference>
<dbReference type="InterPro" id="IPR006200">
    <property type="entry name" value="LexA"/>
</dbReference>
<dbReference type="InterPro" id="IPR039418">
    <property type="entry name" value="LexA-like"/>
</dbReference>
<dbReference type="InterPro" id="IPR036286">
    <property type="entry name" value="LexA/Signal_pep-like_sf"/>
</dbReference>
<dbReference type="InterPro" id="IPR006199">
    <property type="entry name" value="LexA_DNA-bd_dom"/>
</dbReference>
<dbReference type="InterPro" id="IPR050077">
    <property type="entry name" value="LexA_repressor"/>
</dbReference>
<dbReference type="InterPro" id="IPR006197">
    <property type="entry name" value="Peptidase_S24_LexA"/>
</dbReference>
<dbReference type="InterPro" id="IPR015927">
    <property type="entry name" value="Peptidase_S24_S26A/B/C"/>
</dbReference>
<dbReference type="InterPro" id="IPR036388">
    <property type="entry name" value="WH-like_DNA-bd_sf"/>
</dbReference>
<dbReference type="InterPro" id="IPR036390">
    <property type="entry name" value="WH_DNA-bd_sf"/>
</dbReference>
<dbReference type="NCBIfam" id="TIGR00498">
    <property type="entry name" value="lexA"/>
    <property type="match status" value="1"/>
</dbReference>
<dbReference type="PANTHER" id="PTHR33516">
    <property type="entry name" value="LEXA REPRESSOR"/>
    <property type="match status" value="1"/>
</dbReference>
<dbReference type="PANTHER" id="PTHR33516:SF2">
    <property type="entry name" value="LEXA REPRESSOR-RELATED"/>
    <property type="match status" value="1"/>
</dbReference>
<dbReference type="Pfam" id="PF01726">
    <property type="entry name" value="LexA_DNA_bind"/>
    <property type="match status" value="1"/>
</dbReference>
<dbReference type="Pfam" id="PF00717">
    <property type="entry name" value="Peptidase_S24"/>
    <property type="match status" value="1"/>
</dbReference>
<dbReference type="PRINTS" id="PR00726">
    <property type="entry name" value="LEXASERPTASE"/>
</dbReference>
<dbReference type="SUPFAM" id="SSF51306">
    <property type="entry name" value="LexA/Signal peptidase"/>
    <property type="match status" value="1"/>
</dbReference>
<dbReference type="SUPFAM" id="SSF46785">
    <property type="entry name" value="Winged helix' DNA-binding domain"/>
    <property type="match status" value="1"/>
</dbReference>
<keyword id="KW-0002">3D-structure</keyword>
<keyword id="KW-0068">Autocatalytic cleavage</keyword>
<keyword id="KW-0227">DNA damage</keyword>
<keyword id="KW-0234">DNA repair</keyword>
<keyword id="KW-0235">DNA replication</keyword>
<keyword id="KW-0238">DNA-binding</keyword>
<keyword id="KW-0378">Hydrolase</keyword>
<keyword id="KW-1185">Reference proteome</keyword>
<keyword id="KW-0678">Repressor</keyword>
<keyword id="KW-0742">SOS response</keyword>
<keyword id="KW-0804">Transcription</keyword>
<keyword id="KW-0805">Transcription regulation</keyword>
<gene>
    <name evidence="1" type="primary">lexA</name>
    <name type="ordered locus">TM_1082</name>
</gene>
<proteinExistence type="evidence at protein level"/>
<evidence type="ECO:0000255" key="1">
    <source>
        <dbReference type="HAMAP-Rule" id="MF_00015"/>
    </source>
</evidence>
<evidence type="ECO:0007829" key="2">
    <source>
        <dbReference type="PDB" id="3K2Z"/>
    </source>
</evidence>
<protein>
    <recommendedName>
        <fullName evidence="1">LexA repressor</fullName>
        <ecNumber evidence="1">3.4.21.88</ecNumber>
    </recommendedName>
</protein>
<accession>O33927</accession>
<sequence>MKDLTERQRKVLLFIEEFIEKNGYPPSVREIARRFRITPRGALLHLIALEKKGYIERKNGKPRALRISKSIRNKIPLIGEIRAGEKREAIEYLEDYIEIPESFLSSGYDHFLLKVKGESMIEEHICDGDLVLVRRQDWAQNGDIVAAMVDGEVTLKKFYQRGDTVELRPANREMSSMFFRAEKVKILGKVVGVFRKL</sequence>
<name>LEXA_THEMA</name>
<reference key="1">
    <citation type="journal article" date="1997" name="Proc. Natl. Acad. Sci. U.S.A.">
        <title>Both DNA gyrase and reverse gyrase are present in the hyperthermophilic bacterium Thermotoga maritima.</title>
        <authorList>
            <person name="Guipaud O."/>
            <person name="Marguet E."/>
            <person name="Noll K.M."/>
            <person name="Bouthier de la Tour C."/>
            <person name="Forterre P."/>
        </authorList>
    </citation>
    <scope>NUCLEOTIDE SEQUENCE [GENOMIC DNA]</scope>
    <source>
        <strain>ATCC 43589 / DSM 3109 / JCM 10099 / NBRC 100826 / MSB8</strain>
    </source>
</reference>
<reference key="2">
    <citation type="journal article" date="1999" name="Nature">
        <title>Evidence for lateral gene transfer between Archaea and Bacteria from genome sequence of Thermotoga maritima.</title>
        <authorList>
            <person name="Nelson K.E."/>
            <person name="Clayton R.A."/>
            <person name="Gill S.R."/>
            <person name="Gwinn M.L."/>
            <person name="Dodson R.J."/>
            <person name="Haft D.H."/>
            <person name="Hickey E.K."/>
            <person name="Peterson J.D."/>
            <person name="Nelson W.C."/>
            <person name="Ketchum K.A."/>
            <person name="McDonald L.A."/>
            <person name="Utterback T.R."/>
            <person name="Malek J.A."/>
            <person name="Linher K.D."/>
            <person name="Garrett M.M."/>
            <person name="Stewart A.M."/>
            <person name="Cotton M.D."/>
            <person name="Pratt M.S."/>
            <person name="Phillips C.A."/>
            <person name="Richardson D.L."/>
            <person name="Heidelberg J.F."/>
            <person name="Sutton G.G."/>
            <person name="Fleischmann R.D."/>
            <person name="Eisen J.A."/>
            <person name="White O."/>
            <person name="Salzberg S.L."/>
            <person name="Smith H.O."/>
            <person name="Venter J.C."/>
            <person name="Fraser C.M."/>
        </authorList>
    </citation>
    <scope>NUCLEOTIDE SEQUENCE [LARGE SCALE GENOMIC DNA]</scope>
    <source>
        <strain>ATCC 43589 / DSM 3109 / JCM 10099 / NBRC 100826 / MSB8</strain>
    </source>
</reference>